<name>YEAL_SALTY</name>
<protein>
    <recommendedName>
        <fullName evidence="1">UPF0756 membrane protein YeaL</fullName>
    </recommendedName>
</protein>
<comment type="subcellular location">
    <subcellularLocation>
        <location evidence="1">Cell membrane</location>
        <topology evidence="1">Multi-pass membrane protein</topology>
    </subcellularLocation>
</comment>
<comment type="similarity">
    <text evidence="1">Belongs to the UPF0756 family.</text>
</comment>
<evidence type="ECO:0000255" key="1">
    <source>
        <dbReference type="HAMAP-Rule" id="MF_01874"/>
    </source>
</evidence>
<accession>Q8ZPW7</accession>
<reference key="1">
    <citation type="journal article" date="2001" name="Nature">
        <title>Complete genome sequence of Salmonella enterica serovar Typhimurium LT2.</title>
        <authorList>
            <person name="McClelland M."/>
            <person name="Sanderson K.E."/>
            <person name="Spieth J."/>
            <person name="Clifton S.W."/>
            <person name="Latreille P."/>
            <person name="Courtney L."/>
            <person name="Porwollik S."/>
            <person name="Ali J."/>
            <person name="Dante M."/>
            <person name="Du F."/>
            <person name="Hou S."/>
            <person name="Layman D."/>
            <person name="Leonard S."/>
            <person name="Nguyen C."/>
            <person name="Scott K."/>
            <person name="Holmes A."/>
            <person name="Grewal N."/>
            <person name="Mulvaney E."/>
            <person name="Ryan E."/>
            <person name="Sun H."/>
            <person name="Florea L."/>
            <person name="Miller W."/>
            <person name="Stoneking T."/>
            <person name="Nhan M."/>
            <person name="Waterston R."/>
            <person name="Wilson R.K."/>
        </authorList>
    </citation>
    <scope>NUCLEOTIDE SEQUENCE [LARGE SCALE GENOMIC DNA]</scope>
    <source>
        <strain>LT2 / SGSC1412 / ATCC 700720</strain>
    </source>
</reference>
<proteinExistence type="inferred from homology"/>
<gene>
    <name evidence="1" type="primary">yeaL</name>
    <name type="ordered locus">STM1280</name>
</gene>
<dbReference type="EMBL" id="AE006468">
    <property type="protein sequence ID" value="AAL20205.1"/>
    <property type="molecule type" value="Genomic_DNA"/>
</dbReference>
<dbReference type="RefSeq" id="NP_460246.2">
    <property type="nucleotide sequence ID" value="NC_003197.2"/>
</dbReference>
<dbReference type="STRING" id="99287.STM1280"/>
<dbReference type="PaxDb" id="99287-STM1280"/>
<dbReference type="GeneID" id="1252798"/>
<dbReference type="KEGG" id="stm:STM1280"/>
<dbReference type="PATRIC" id="fig|99287.12.peg.1360"/>
<dbReference type="HOGENOM" id="CLU_125889_0_0_6"/>
<dbReference type="PhylomeDB" id="Q8ZPW7"/>
<dbReference type="Proteomes" id="UP000001014">
    <property type="component" value="Chromosome"/>
</dbReference>
<dbReference type="GO" id="GO:0005886">
    <property type="term" value="C:plasma membrane"/>
    <property type="evidence" value="ECO:0000318"/>
    <property type="project" value="GO_Central"/>
</dbReference>
<dbReference type="HAMAP" id="MF_01874">
    <property type="entry name" value="UPF0756"/>
    <property type="match status" value="1"/>
</dbReference>
<dbReference type="InterPro" id="IPR007382">
    <property type="entry name" value="UPF0756_TM"/>
</dbReference>
<dbReference type="PANTHER" id="PTHR38452">
    <property type="entry name" value="UPF0756 MEMBRANE PROTEIN YEAL"/>
    <property type="match status" value="1"/>
</dbReference>
<dbReference type="PANTHER" id="PTHR38452:SF1">
    <property type="entry name" value="UPF0756 MEMBRANE PROTEIN YEAL"/>
    <property type="match status" value="1"/>
</dbReference>
<dbReference type="Pfam" id="PF04284">
    <property type="entry name" value="DUF441"/>
    <property type="match status" value="1"/>
</dbReference>
<keyword id="KW-1003">Cell membrane</keyword>
<keyword id="KW-0472">Membrane</keyword>
<keyword id="KW-1185">Reference proteome</keyword>
<keyword id="KW-0812">Transmembrane</keyword>
<keyword id="KW-1133">Transmembrane helix</keyword>
<sequence>MFDVTLLILLGLAALGFISHNTTVAVSILVLIIVRVTPLNTFFPWIEKQGLTVGIIILTIGVMAPIASGTLPPSTLIHSFVNWKSLVAIAVGVFVSWLGGRGITLMGNQPQLVAGLLVGTVLGVALFRGVRSAH</sequence>
<organism>
    <name type="scientific">Salmonella typhimurium (strain LT2 / SGSC1412 / ATCC 700720)</name>
    <dbReference type="NCBI Taxonomy" id="99287"/>
    <lineage>
        <taxon>Bacteria</taxon>
        <taxon>Pseudomonadati</taxon>
        <taxon>Pseudomonadota</taxon>
        <taxon>Gammaproteobacteria</taxon>
        <taxon>Enterobacterales</taxon>
        <taxon>Enterobacteriaceae</taxon>
        <taxon>Salmonella</taxon>
    </lineage>
</organism>
<feature type="chain" id="PRO_0000388934" description="UPF0756 membrane protein YeaL">
    <location>
        <begin position="1"/>
        <end position="134"/>
    </location>
</feature>
<feature type="transmembrane region" description="Helical" evidence="1">
    <location>
        <begin position="14"/>
        <end position="34"/>
    </location>
</feature>
<feature type="transmembrane region" description="Helical" evidence="1">
    <location>
        <begin position="51"/>
        <end position="71"/>
    </location>
</feature>
<feature type="transmembrane region" description="Helical" evidence="1">
    <location>
        <begin position="86"/>
        <end position="106"/>
    </location>
</feature>
<feature type="transmembrane region" description="Helical" evidence="1">
    <location>
        <begin position="110"/>
        <end position="130"/>
    </location>
</feature>